<name>IF11_ACISJ</name>
<reference key="1">
    <citation type="submission" date="2006-12" db="EMBL/GenBank/DDBJ databases">
        <title>Complete sequence of chromosome 1 of Acidovorax sp. JS42.</title>
        <authorList>
            <person name="Copeland A."/>
            <person name="Lucas S."/>
            <person name="Lapidus A."/>
            <person name="Barry K."/>
            <person name="Detter J.C."/>
            <person name="Glavina del Rio T."/>
            <person name="Dalin E."/>
            <person name="Tice H."/>
            <person name="Pitluck S."/>
            <person name="Chertkov O."/>
            <person name="Brettin T."/>
            <person name="Bruce D."/>
            <person name="Han C."/>
            <person name="Tapia R."/>
            <person name="Gilna P."/>
            <person name="Schmutz J."/>
            <person name="Larimer F."/>
            <person name="Land M."/>
            <person name="Hauser L."/>
            <person name="Kyrpides N."/>
            <person name="Kim E."/>
            <person name="Stahl D."/>
            <person name="Richardson P."/>
        </authorList>
    </citation>
    <scope>NUCLEOTIDE SEQUENCE [LARGE SCALE GENOMIC DNA]</scope>
    <source>
        <strain>JS42</strain>
    </source>
</reference>
<accession>A1W3R6</accession>
<proteinExistence type="inferred from homology"/>
<protein>
    <recommendedName>
        <fullName evidence="1">Translation initiation factor IF-1 1</fullName>
    </recommendedName>
</protein>
<keyword id="KW-0963">Cytoplasm</keyword>
<keyword id="KW-0396">Initiation factor</keyword>
<keyword id="KW-0648">Protein biosynthesis</keyword>
<keyword id="KW-0694">RNA-binding</keyword>
<keyword id="KW-0699">rRNA-binding</keyword>
<organism>
    <name type="scientific">Acidovorax sp. (strain JS42)</name>
    <dbReference type="NCBI Taxonomy" id="232721"/>
    <lineage>
        <taxon>Bacteria</taxon>
        <taxon>Pseudomonadati</taxon>
        <taxon>Pseudomonadota</taxon>
        <taxon>Betaproteobacteria</taxon>
        <taxon>Burkholderiales</taxon>
        <taxon>Comamonadaceae</taxon>
        <taxon>Acidovorax</taxon>
    </lineage>
</organism>
<evidence type="ECO:0000255" key="1">
    <source>
        <dbReference type="HAMAP-Rule" id="MF_00075"/>
    </source>
</evidence>
<dbReference type="EMBL" id="CP000539">
    <property type="protein sequence ID" value="ABM40891.1"/>
    <property type="molecule type" value="Genomic_DNA"/>
</dbReference>
<dbReference type="SMR" id="A1W3R6"/>
<dbReference type="STRING" id="232721.Ajs_0646"/>
<dbReference type="KEGG" id="ajs:Ajs_0646"/>
<dbReference type="eggNOG" id="COG0361">
    <property type="taxonomic scope" value="Bacteria"/>
</dbReference>
<dbReference type="HOGENOM" id="CLU_151267_4_1_4"/>
<dbReference type="Proteomes" id="UP000000645">
    <property type="component" value="Chromosome"/>
</dbReference>
<dbReference type="GO" id="GO:0005829">
    <property type="term" value="C:cytosol"/>
    <property type="evidence" value="ECO:0007669"/>
    <property type="project" value="TreeGrafter"/>
</dbReference>
<dbReference type="GO" id="GO:0043022">
    <property type="term" value="F:ribosome binding"/>
    <property type="evidence" value="ECO:0007669"/>
    <property type="project" value="UniProtKB-UniRule"/>
</dbReference>
<dbReference type="GO" id="GO:0019843">
    <property type="term" value="F:rRNA binding"/>
    <property type="evidence" value="ECO:0007669"/>
    <property type="project" value="UniProtKB-UniRule"/>
</dbReference>
<dbReference type="GO" id="GO:0003743">
    <property type="term" value="F:translation initiation factor activity"/>
    <property type="evidence" value="ECO:0007669"/>
    <property type="project" value="UniProtKB-UniRule"/>
</dbReference>
<dbReference type="CDD" id="cd04451">
    <property type="entry name" value="S1_IF1"/>
    <property type="match status" value="1"/>
</dbReference>
<dbReference type="FunFam" id="2.40.50.140:FF:000002">
    <property type="entry name" value="Translation initiation factor IF-1"/>
    <property type="match status" value="1"/>
</dbReference>
<dbReference type="Gene3D" id="2.40.50.140">
    <property type="entry name" value="Nucleic acid-binding proteins"/>
    <property type="match status" value="1"/>
</dbReference>
<dbReference type="HAMAP" id="MF_00075">
    <property type="entry name" value="IF_1"/>
    <property type="match status" value="1"/>
</dbReference>
<dbReference type="InterPro" id="IPR012340">
    <property type="entry name" value="NA-bd_OB-fold"/>
</dbReference>
<dbReference type="InterPro" id="IPR006196">
    <property type="entry name" value="RNA-binding_domain_S1_IF1"/>
</dbReference>
<dbReference type="InterPro" id="IPR004368">
    <property type="entry name" value="TIF_IF1"/>
</dbReference>
<dbReference type="NCBIfam" id="TIGR00008">
    <property type="entry name" value="infA"/>
    <property type="match status" value="1"/>
</dbReference>
<dbReference type="PANTHER" id="PTHR33370">
    <property type="entry name" value="TRANSLATION INITIATION FACTOR IF-1, CHLOROPLASTIC"/>
    <property type="match status" value="1"/>
</dbReference>
<dbReference type="PANTHER" id="PTHR33370:SF1">
    <property type="entry name" value="TRANSLATION INITIATION FACTOR IF-1, CHLOROPLASTIC"/>
    <property type="match status" value="1"/>
</dbReference>
<dbReference type="Pfam" id="PF01176">
    <property type="entry name" value="eIF-1a"/>
    <property type="match status" value="1"/>
</dbReference>
<dbReference type="SUPFAM" id="SSF50249">
    <property type="entry name" value="Nucleic acid-binding proteins"/>
    <property type="match status" value="1"/>
</dbReference>
<dbReference type="PROSITE" id="PS50832">
    <property type="entry name" value="S1_IF1_TYPE"/>
    <property type="match status" value="1"/>
</dbReference>
<comment type="function">
    <text evidence="1">One of the essential components for the initiation of protein synthesis. Stabilizes the binding of IF-2 and IF-3 on the 30S subunit to which N-formylmethionyl-tRNA(fMet) subsequently binds. Helps modulate mRNA selection, yielding the 30S pre-initiation complex (PIC). Upon addition of the 50S ribosomal subunit IF-1, IF-2 and IF-3 are released leaving the mature 70S translation initiation complex.</text>
</comment>
<comment type="subunit">
    <text evidence="1">Component of the 30S ribosomal translation pre-initiation complex which assembles on the 30S ribosome in the order IF-2 and IF-3, IF-1 and N-formylmethionyl-tRNA(fMet); mRNA recruitment can occur at any time during PIC assembly.</text>
</comment>
<comment type="subcellular location">
    <subcellularLocation>
        <location evidence="1">Cytoplasm</location>
    </subcellularLocation>
</comment>
<comment type="similarity">
    <text evidence="1">Belongs to the IF-1 family.</text>
</comment>
<feature type="chain" id="PRO_0000338747" description="Translation initiation factor IF-1 1">
    <location>
        <begin position="1"/>
        <end position="89"/>
    </location>
</feature>
<feature type="domain" description="S1-like" evidence="1">
    <location>
        <begin position="1"/>
        <end position="73"/>
    </location>
</feature>
<gene>
    <name evidence="1" type="primary">infA1</name>
    <name type="ordered locus">Ajs_0646</name>
</gene>
<sequence length="89" mass="10150">MSNKEQLIEMQGKVDEVLPDSRFRVVLENGHTLIAYSGGKMRKHRIRVLAGDTVSLEMSPYDLTKGRITFRHLEPRAGGAPRRPSPHRR</sequence>